<accession>P0A4R5</accession>
<accession>O06704</accession>
<protein>
    <recommendedName>
        <fullName evidence="1">Urease accessory protein UreD</fullName>
    </recommendedName>
</protein>
<sequence>MSETLDQWRAGLTLGFAPGHAGRTVLRERAHYGPMLVQRALYPEGPQVCHVAILHPPSGIAGGDALEIRVDVAGGARAALTTPGATRWYKSNGRQASQDVHLRVAAGGRLDWLPLESIFFEEADALARNRIQLESGAAAIGWDLIQLGRVNQSGHWSQGRLHTATELYVDGRLLWVDQGLVGAQDDVRRQVSGLAGFPVHAALWSFGPRLDAEQNEELAGLMPWSDTLRGAATTMPYDATQSLCLVRCLGVHMEDVRAVMTDAWAYLRPRVLDTPAVVPRLWAT</sequence>
<name>URED_BORBR</name>
<dbReference type="EMBL" id="AF000579">
    <property type="protein sequence ID" value="AAC46124.1"/>
    <property type="molecule type" value="Genomic_DNA"/>
</dbReference>
<dbReference type="EMBL" id="BX640450">
    <property type="protein sequence ID" value="CAE34690.1"/>
    <property type="molecule type" value="Genomic_DNA"/>
</dbReference>
<dbReference type="RefSeq" id="WP_003814832.1">
    <property type="nucleotide sequence ID" value="NC_002927.3"/>
</dbReference>
<dbReference type="SMR" id="P0A4R5"/>
<dbReference type="KEGG" id="bbr:BB4327"/>
<dbReference type="eggNOG" id="COG0829">
    <property type="taxonomic scope" value="Bacteria"/>
</dbReference>
<dbReference type="HOGENOM" id="CLU_056339_0_0_4"/>
<dbReference type="Proteomes" id="UP000001027">
    <property type="component" value="Chromosome"/>
</dbReference>
<dbReference type="GO" id="GO:0005737">
    <property type="term" value="C:cytoplasm"/>
    <property type="evidence" value="ECO:0007669"/>
    <property type="project" value="UniProtKB-SubCell"/>
</dbReference>
<dbReference type="GO" id="GO:0016151">
    <property type="term" value="F:nickel cation binding"/>
    <property type="evidence" value="ECO:0007669"/>
    <property type="project" value="UniProtKB-UniRule"/>
</dbReference>
<dbReference type="HAMAP" id="MF_01384">
    <property type="entry name" value="UreD"/>
    <property type="match status" value="1"/>
</dbReference>
<dbReference type="InterPro" id="IPR002669">
    <property type="entry name" value="UreD"/>
</dbReference>
<dbReference type="PANTHER" id="PTHR33643">
    <property type="entry name" value="UREASE ACCESSORY PROTEIN D"/>
    <property type="match status" value="1"/>
</dbReference>
<dbReference type="PANTHER" id="PTHR33643:SF1">
    <property type="entry name" value="UREASE ACCESSORY PROTEIN D"/>
    <property type="match status" value="1"/>
</dbReference>
<dbReference type="Pfam" id="PF01774">
    <property type="entry name" value="UreD"/>
    <property type="match status" value="1"/>
</dbReference>
<gene>
    <name evidence="1" type="primary">ureD</name>
    <name type="ordered locus">BB4327</name>
</gene>
<keyword id="KW-0143">Chaperone</keyword>
<keyword id="KW-0963">Cytoplasm</keyword>
<keyword id="KW-0996">Nickel insertion</keyword>
<comment type="function">
    <text evidence="1">Required for maturation of urease via the functional incorporation of the urease nickel metallocenter.</text>
</comment>
<comment type="subunit">
    <text evidence="1">UreD, UreF and UreG form a complex that acts as a GTP-hydrolysis-dependent molecular chaperone, activating the urease apoprotein by helping to assemble the nickel containing metallocenter of UreC. The UreE protein probably delivers the nickel.</text>
</comment>
<comment type="subcellular location">
    <subcellularLocation>
        <location evidence="1">Cytoplasm</location>
    </subcellularLocation>
</comment>
<comment type="similarity">
    <text evidence="1">Belongs to the UreD family.</text>
</comment>
<organism>
    <name type="scientific">Bordetella bronchiseptica (strain ATCC BAA-588 / NCTC 13252 / RB50)</name>
    <name type="common">Alcaligenes bronchisepticus</name>
    <dbReference type="NCBI Taxonomy" id="257310"/>
    <lineage>
        <taxon>Bacteria</taxon>
        <taxon>Pseudomonadati</taxon>
        <taxon>Pseudomonadota</taxon>
        <taxon>Betaproteobacteria</taxon>
        <taxon>Burkholderiales</taxon>
        <taxon>Alcaligenaceae</taxon>
        <taxon>Bordetella</taxon>
    </lineage>
</organism>
<proteinExistence type="inferred from homology"/>
<feature type="chain" id="PRO_0000067607" description="Urease accessory protein UreD">
    <location>
        <begin position="1"/>
        <end position="284"/>
    </location>
</feature>
<evidence type="ECO:0000255" key="1">
    <source>
        <dbReference type="HAMAP-Rule" id="MF_01384"/>
    </source>
</evidence>
<reference key="1">
    <citation type="journal article" date="1998" name="Gene">
        <title>Characterisation of the urease gene cluster in Bordetella bronchiseptica.</title>
        <authorList>
            <person name="McMillan D.J."/>
            <person name="Mau M."/>
            <person name="Walker M.J."/>
        </authorList>
    </citation>
    <scope>NUCLEOTIDE SEQUENCE [GENOMIC DNA]</scope>
    <source>
        <strain>BB7866</strain>
    </source>
</reference>
<reference key="2">
    <citation type="journal article" date="2003" name="Nat. Genet.">
        <title>Comparative analysis of the genome sequences of Bordetella pertussis, Bordetella parapertussis and Bordetella bronchiseptica.</title>
        <authorList>
            <person name="Parkhill J."/>
            <person name="Sebaihia M."/>
            <person name="Preston A."/>
            <person name="Murphy L.D."/>
            <person name="Thomson N.R."/>
            <person name="Harris D.E."/>
            <person name="Holden M.T.G."/>
            <person name="Churcher C.M."/>
            <person name="Bentley S.D."/>
            <person name="Mungall K.L."/>
            <person name="Cerdeno-Tarraga A.-M."/>
            <person name="Temple L."/>
            <person name="James K.D."/>
            <person name="Harris B."/>
            <person name="Quail M.A."/>
            <person name="Achtman M."/>
            <person name="Atkin R."/>
            <person name="Baker S."/>
            <person name="Basham D."/>
            <person name="Bason N."/>
            <person name="Cherevach I."/>
            <person name="Chillingworth T."/>
            <person name="Collins M."/>
            <person name="Cronin A."/>
            <person name="Davis P."/>
            <person name="Doggett J."/>
            <person name="Feltwell T."/>
            <person name="Goble A."/>
            <person name="Hamlin N."/>
            <person name="Hauser H."/>
            <person name="Holroyd S."/>
            <person name="Jagels K."/>
            <person name="Leather S."/>
            <person name="Moule S."/>
            <person name="Norberczak H."/>
            <person name="O'Neil S."/>
            <person name="Ormond D."/>
            <person name="Price C."/>
            <person name="Rabbinowitsch E."/>
            <person name="Rutter S."/>
            <person name="Sanders M."/>
            <person name="Saunders D."/>
            <person name="Seeger K."/>
            <person name="Sharp S."/>
            <person name="Simmonds M."/>
            <person name="Skelton J."/>
            <person name="Squares R."/>
            <person name="Squares S."/>
            <person name="Stevens K."/>
            <person name="Unwin L."/>
            <person name="Whitehead S."/>
            <person name="Barrell B.G."/>
            <person name="Maskell D.J."/>
        </authorList>
    </citation>
    <scope>NUCLEOTIDE SEQUENCE [LARGE SCALE GENOMIC DNA]</scope>
    <source>
        <strain>ATCC BAA-588 / NCTC 13252 / RB50</strain>
    </source>
</reference>